<keyword id="KW-0012">Acyltransferase</keyword>
<keyword id="KW-0963">Cytoplasm</keyword>
<keyword id="KW-0808">Transferase</keyword>
<evidence type="ECO:0000255" key="1">
    <source>
        <dbReference type="HAMAP-Rule" id="MF_00688"/>
    </source>
</evidence>
<sequence length="194" mass="22456">MIDIGELLRAYRKGYFPMSDPSDGKLYWCQPYNRAIIPMESYRPSRDVRRLLRRNDFRVRFNTDFEGVIRACAAPRPNAVETWISESIIESYLELNRLGIAHSVESWYGDELAGGLYGLAIGGAFFGESMFYRRSYASRIAFDRLVMHLRKRGYLLLDAQIMNPHLQKLGAVDIPHKAYMQMLDAALHKKIPFL</sequence>
<gene>
    <name evidence="1" type="primary">aat</name>
    <name type="ordered locus">Clim_0550</name>
</gene>
<dbReference type="EC" id="2.3.2.6" evidence="1"/>
<dbReference type="EMBL" id="CP001097">
    <property type="protein sequence ID" value="ACD89642.1"/>
    <property type="molecule type" value="Genomic_DNA"/>
</dbReference>
<dbReference type="RefSeq" id="WP_012465523.1">
    <property type="nucleotide sequence ID" value="NC_010803.1"/>
</dbReference>
<dbReference type="SMR" id="B3EGK5"/>
<dbReference type="STRING" id="290315.Clim_0550"/>
<dbReference type="KEGG" id="cli:Clim_0550"/>
<dbReference type="eggNOG" id="COG2360">
    <property type="taxonomic scope" value="Bacteria"/>
</dbReference>
<dbReference type="HOGENOM" id="CLU_075045_1_1_10"/>
<dbReference type="OrthoDB" id="9790282at2"/>
<dbReference type="Proteomes" id="UP000008841">
    <property type="component" value="Chromosome"/>
</dbReference>
<dbReference type="GO" id="GO:0005737">
    <property type="term" value="C:cytoplasm"/>
    <property type="evidence" value="ECO:0007669"/>
    <property type="project" value="UniProtKB-SubCell"/>
</dbReference>
<dbReference type="GO" id="GO:0008914">
    <property type="term" value="F:leucyl-tRNA--protein transferase activity"/>
    <property type="evidence" value="ECO:0007669"/>
    <property type="project" value="UniProtKB-UniRule"/>
</dbReference>
<dbReference type="GO" id="GO:0030163">
    <property type="term" value="P:protein catabolic process"/>
    <property type="evidence" value="ECO:0007669"/>
    <property type="project" value="UniProtKB-UniRule"/>
</dbReference>
<dbReference type="Gene3D" id="3.40.630.70">
    <property type="entry name" value="Leucyl/phenylalanyl-tRNA-protein transferase, C-terminal domain"/>
    <property type="match status" value="1"/>
</dbReference>
<dbReference type="HAMAP" id="MF_00688">
    <property type="entry name" value="Leu_Phe_trans"/>
    <property type="match status" value="1"/>
</dbReference>
<dbReference type="InterPro" id="IPR016181">
    <property type="entry name" value="Acyl_CoA_acyltransferase"/>
</dbReference>
<dbReference type="InterPro" id="IPR004616">
    <property type="entry name" value="Leu/Phe-tRNA_Trfase"/>
</dbReference>
<dbReference type="InterPro" id="IPR042203">
    <property type="entry name" value="Leu/Phe-tRNA_Trfase_C"/>
</dbReference>
<dbReference type="NCBIfam" id="TIGR00667">
    <property type="entry name" value="aat"/>
    <property type="match status" value="1"/>
</dbReference>
<dbReference type="PANTHER" id="PTHR30098">
    <property type="entry name" value="LEUCYL/PHENYLALANYL-TRNA--PROTEIN TRANSFERASE"/>
    <property type="match status" value="1"/>
</dbReference>
<dbReference type="PANTHER" id="PTHR30098:SF2">
    <property type="entry name" value="LEUCYL_PHENYLALANYL-TRNA--PROTEIN TRANSFERASE"/>
    <property type="match status" value="1"/>
</dbReference>
<dbReference type="Pfam" id="PF03588">
    <property type="entry name" value="Leu_Phe_trans"/>
    <property type="match status" value="1"/>
</dbReference>
<dbReference type="SUPFAM" id="SSF55729">
    <property type="entry name" value="Acyl-CoA N-acyltransferases (Nat)"/>
    <property type="match status" value="1"/>
</dbReference>
<protein>
    <recommendedName>
        <fullName evidence="1">Leucyl/phenylalanyl-tRNA--protein transferase</fullName>
        <ecNumber evidence="1">2.3.2.6</ecNumber>
    </recommendedName>
    <alternativeName>
        <fullName evidence="1">L/F-transferase</fullName>
    </alternativeName>
    <alternativeName>
        <fullName evidence="1">Leucyltransferase</fullName>
    </alternativeName>
    <alternativeName>
        <fullName evidence="1">Phenyalanyltransferase</fullName>
    </alternativeName>
</protein>
<organism>
    <name type="scientific">Chlorobium limicola (strain DSM 245 / NBRC 103803 / 6330)</name>
    <dbReference type="NCBI Taxonomy" id="290315"/>
    <lineage>
        <taxon>Bacteria</taxon>
        <taxon>Pseudomonadati</taxon>
        <taxon>Chlorobiota</taxon>
        <taxon>Chlorobiia</taxon>
        <taxon>Chlorobiales</taxon>
        <taxon>Chlorobiaceae</taxon>
        <taxon>Chlorobium/Pelodictyon group</taxon>
        <taxon>Chlorobium</taxon>
    </lineage>
</organism>
<name>LFTR_CHLL2</name>
<proteinExistence type="inferred from homology"/>
<comment type="function">
    <text evidence="1">Functions in the N-end rule pathway of protein degradation where it conjugates Leu, Phe and, less efficiently, Met from aminoacyl-tRNAs to the N-termini of proteins containing an N-terminal arginine or lysine.</text>
</comment>
<comment type="catalytic activity">
    <reaction evidence="1">
        <text>N-terminal L-lysyl-[protein] + L-leucyl-tRNA(Leu) = N-terminal L-leucyl-L-lysyl-[protein] + tRNA(Leu) + H(+)</text>
        <dbReference type="Rhea" id="RHEA:12340"/>
        <dbReference type="Rhea" id="RHEA-COMP:9613"/>
        <dbReference type="Rhea" id="RHEA-COMP:9622"/>
        <dbReference type="Rhea" id="RHEA-COMP:12670"/>
        <dbReference type="Rhea" id="RHEA-COMP:12671"/>
        <dbReference type="ChEBI" id="CHEBI:15378"/>
        <dbReference type="ChEBI" id="CHEBI:65249"/>
        <dbReference type="ChEBI" id="CHEBI:78442"/>
        <dbReference type="ChEBI" id="CHEBI:78494"/>
        <dbReference type="ChEBI" id="CHEBI:133043"/>
        <dbReference type="EC" id="2.3.2.6"/>
    </reaction>
</comment>
<comment type="catalytic activity">
    <reaction evidence="1">
        <text>N-terminal L-arginyl-[protein] + L-leucyl-tRNA(Leu) = N-terminal L-leucyl-L-arginyl-[protein] + tRNA(Leu) + H(+)</text>
        <dbReference type="Rhea" id="RHEA:50416"/>
        <dbReference type="Rhea" id="RHEA-COMP:9613"/>
        <dbReference type="Rhea" id="RHEA-COMP:9622"/>
        <dbReference type="Rhea" id="RHEA-COMP:12672"/>
        <dbReference type="Rhea" id="RHEA-COMP:12673"/>
        <dbReference type="ChEBI" id="CHEBI:15378"/>
        <dbReference type="ChEBI" id="CHEBI:64719"/>
        <dbReference type="ChEBI" id="CHEBI:78442"/>
        <dbReference type="ChEBI" id="CHEBI:78494"/>
        <dbReference type="ChEBI" id="CHEBI:133044"/>
        <dbReference type="EC" id="2.3.2.6"/>
    </reaction>
</comment>
<comment type="catalytic activity">
    <reaction evidence="1">
        <text>L-phenylalanyl-tRNA(Phe) + an N-terminal L-alpha-aminoacyl-[protein] = an N-terminal L-phenylalanyl-L-alpha-aminoacyl-[protein] + tRNA(Phe)</text>
        <dbReference type="Rhea" id="RHEA:43632"/>
        <dbReference type="Rhea" id="RHEA-COMP:9668"/>
        <dbReference type="Rhea" id="RHEA-COMP:9699"/>
        <dbReference type="Rhea" id="RHEA-COMP:10636"/>
        <dbReference type="Rhea" id="RHEA-COMP:10637"/>
        <dbReference type="ChEBI" id="CHEBI:78442"/>
        <dbReference type="ChEBI" id="CHEBI:78531"/>
        <dbReference type="ChEBI" id="CHEBI:78597"/>
        <dbReference type="ChEBI" id="CHEBI:83561"/>
        <dbReference type="EC" id="2.3.2.6"/>
    </reaction>
</comment>
<comment type="subcellular location">
    <subcellularLocation>
        <location evidence="1">Cytoplasm</location>
    </subcellularLocation>
</comment>
<comment type="similarity">
    <text evidence="1">Belongs to the L/F-transferase family.</text>
</comment>
<accession>B3EGK5</accession>
<reference key="1">
    <citation type="submission" date="2008-05" db="EMBL/GenBank/DDBJ databases">
        <title>Complete sequence of Chlorobium limicola DSM 245.</title>
        <authorList>
            <consortium name="US DOE Joint Genome Institute"/>
            <person name="Lucas S."/>
            <person name="Copeland A."/>
            <person name="Lapidus A."/>
            <person name="Glavina del Rio T."/>
            <person name="Dalin E."/>
            <person name="Tice H."/>
            <person name="Bruce D."/>
            <person name="Goodwin L."/>
            <person name="Pitluck S."/>
            <person name="Schmutz J."/>
            <person name="Larimer F."/>
            <person name="Land M."/>
            <person name="Hauser L."/>
            <person name="Kyrpides N."/>
            <person name="Ovchinnikova G."/>
            <person name="Zhao F."/>
            <person name="Li T."/>
            <person name="Liu Z."/>
            <person name="Overmann J."/>
            <person name="Bryant D.A."/>
            <person name="Richardson P."/>
        </authorList>
    </citation>
    <scope>NUCLEOTIDE SEQUENCE [LARGE SCALE GENOMIC DNA]</scope>
    <source>
        <strain>DSM 245 / NBRC 103803 / 6330</strain>
    </source>
</reference>
<feature type="chain" id="PRO_1000131913" description="Leucyl/phenylalanyl-tRNA--protein transferase">
    <location>
        <begin position="1"/>
        <end position="194"/>
    </location>
</feature>